<proteinExistence type="inferred from homology"/>
<dbReference type="EMBL" id="CP000262">
    <property type="protein sequence ID" value="ABF37021.1"/>
    <property type="molecule type" value="Genomic_DNA"/>
</dbReference>
<dbReference type="SMR" id="Q1J8Z0"/>
<dbReference type="KEGG" id="spi:MGAS10750_Spy0071"/>
<dbReference type="HOGENOM" id="CLU_135723_6_2_9"/>
<dbReference type="Proteomes" id="UP000002434">
    <property type="component" value="Chromosome"/>
</dbReference>
<dbReference type="GO" id="GO:0005737">
    <property type="term" value="C:cytoplasm"/>
    <property type="evidence" value="ECO:0007669"/>
    <property type="project" value="UniProtKB-ARBA"/>
</dbReference>
<dbReference type="GO" id="GO:1990904">
    <property type="term" value="C:ribonucleoprotein complex"/>
    <property type="evidence" value="ECO:0007669"/>
    <property type="project" value="UniProtKB-KW"/>
</dbReference>
<dbReference type="GO" id="GO:0005840">
    <property type="term" value="C:ribosome"/>
    <property type="evidence" value="ECO:0007669"/>
    <property type="project" value="UniProtKB-KW"/>
</dbReference>
<dbReference type="GO" id="GO:0003735">
    <property type="term" value="F:structural constituent of ribosome"/>
    <property type="evidence" value="ECO:0007669"/>
    <property type="project" value="InterPro"/>
</dbReference>
<dbReference type="GO" id="GO:0006412">
    <property type="term" value="P:translation"/>
    <property type="evidence" value="ECO:0007669"/>
    <property type="project" value="UniProtKB-UniRule"/>
</dbReference>
<dbReference type="HAMAP" id="MF_00251">
    <property type="entry name" value="Ribosomal_bL36"/>
    <property type="match status" value="1"/>
</dbReference>
<dbReference type="InterPro" id="IPR000473">
    <property type="entry name" value="Ribosomal_bL36"/>
</dbReference>
<dbReference type="InterPro" id="IPR035977">
    <property type="entry name" value="Ribosomal_bL36_sp"/>
</dbReference>
<dbReference type="NCBIfam" id="TIGR01022">
    <property type="entry name" value="rpmJ_bact"/>
    <property type="match status" value="1"/>
</dbReference>
<dbReference type="PANTHER" id="PTHR42888">
    <property type="entry name" value="50S RIBOSOMAL PROTEIN L36, CHLOROPLASTIC"/>
    <property type="match status" value="1"/>
</dbReference>
<dbReference type="PANTHER" id="PTHR42888:SF1">
    <property type="entry name" value="LARGE RIBOSOMAL SUBUNIT PROTEIN BL36C"/>
    <property type="match status" value="1"/>
</dbReference>
<dbReference type="Pfam" id="PF00444">
    <property type="entry name" value="Ribosomal_L36"/>
    <property type="match status" value="1"/>
</dbReference>
<dbReference type="SUPFAM" id="SSF57840">
    <property type="entry name" value="Ribosomal protein L36"/>
    <property type="match status" value="1"/>
</dbReference>
<dbReference type="PROSITE" id="PS00828">
    <property type="entry name" value="RIBOSOMAL_L36"/>
    <property type="match status" value="1"/>
</dbReference>
<evidence type="ECO:0000255" key="1">
    <source>
        <dbReference type="HAMAP-Rule" id="MF_00251"/>
    </source>
</evidence>
<evidence type="ECO:0000305" key="2"/>
<organism>
    <name type="scientific">Streptococcus pyogenes serotype M4 (strain MGAS10750)</name>
    <dbReference type="NCBI Taxonomy" id="370554"/>
    <lineage>
        <taxon>Bacteria</taxon>
        <taxon>Bacillati</taxon>
        <taxon>Bacillota</taxon>
        <taxon>Bacilli</taxon>
        <taxon>Lactobacillales</taxon>
        <taxon>Streptococcaceae</taxon>
        <taxon>Streptococcus</taxon>
    </lineage>
</organism>
<name>RL36_STRPF</name>
<reference key="1">
    <citation type="journal article" date="2006" name="Proc. Natl. Acad. Sci. U.S.A.">
        <title>Molecular genetic anatomy of inter- and intraserotype variation in the human bacterial pathogen group A Streptococcus.</title>
        <authorList>
            <person name="Beres S.B."/>
            <person name="Richter E.W."/>
            <person name="Nagiec M.J."/>
            <person name="Sumby P."/>
            <person name="Porcella S.F."/>
            <person name="DeLeo F.R."/>
            <person name="Musser J.M."/>
        </authorList>
    </citation>
    <scope>NUCLEOTIDE SEQUENCE [LARGE SCALE GENOMIC DNA]</scope>
    <source>
        <strain>MGAS10750</strain>
    </source>
</reference>
<accession>Q1J8Z0</accession>
<protein>
    <recommendedName>
        <fullName evidence="1">Large ribosomal subunit protein bL36</fullName>
    </recommendedName>
    <alternativeName>
        <fullName evidence="2">50S ribosomal protein L36</fullName>
    </alternativeName>
</protein>
<keyword id="KW-0687">Ribonucleoprotein</keyword>
<keyword id="KW-0689">Ribosomal protein</keyword>
<comment type="similarity">
    <text evidence="1">Belongs to the bacterial ribosomal protein bL36 family.</text>
</comment>
<feature type="chain" id="PRO_0000302311" description="Large ribosomal subunit protein bL36">
    <location>
        <begin position="1"/>
        <end position="38"/>
    </location>
</feature>
<sequence length="38" mass="4451">MKVRPSVKPICEYCKVIRRNGRVMVICPTNPKHKQRQG</sequence>
<gene>
    <name evidence="1" type="primary">rpmJ</name>
    <name type="ordered locus">MGAS10750_Spy0071</name>
</gene>